<organism>
    <name type="scientific">Euglena myxocylindracea</name>
    <dbReference type="NCBI Taxonomy" id="38276"/>
    <lineage>
        <taxon>Eukaryota</taxon>
        <taxon>Discoba</taxon>
        <taxon>Euglenozoa</taxon>
        <taxon>Euglenida</taxon>
        <taxon>Spirocuta</taxon>
        <taxon>Euglenophyceae</taxon>
        <taxon>Euglenales</taxon>
        <taxon>Euglenaceae</taxon>
        <taxon>Euglena</taxon>
    </lineage>
</organism>
<comment type="function">
    <text evidence="1">DNA-dependent RNA polymerase catalyzes the transcription of DNA into RNA using the four ribonucleoside triphosphates as substrates.</text>
</comment>
<comment type="catalytic activity">
    <reaction>
        <text>RNA(n) + a ribonucleoside 5'-triphosphate = RNA(n+1) + diphosphate</text>
        <dbReference type="Rhea" id="RHEA:21248"/>
        <dbReference type="Rhea" id="RHEA-COMP:14527"/>
        <dbReference type="Rhea" id="RHEA-COMP:17342"/>
        <dbReference type="ChEBI" id="CHEBI:33019"/>
        <dbReference type="ChEBI" id="CHEBI:61557"/>
        <dbReference type="ChEBI" id="CHEBI:140395"/>
        <dbReference type="EC" id="2.7.7.6"/>
    </reaction>
</comment>
<comment type="subunit">
    <text evidence="1">In plastids the minimal PEP RNA polymerase catalytic core is composed of four subunits: alpha, beta, beta', and beta''. When a (nuclear-encoded) sigma factor is associated with the core the holoenzyme is formed, which can initiate transcription (By similarity).</text>
</comment>
<comment type="subcellular location">
    <subcellularLocation>
        <location>Plastid</location>
        <location>Chloroplast</location>
    </subcellularLocation>
</comment>
<comment type="similarity">
    <text evidence="2">Belongs to the RNA polymerase alpha chain family.</text>
</comment>
<comment type="caution">
    <text evidence="2">The C-terminal domain thought to be required for interaction with some regulatory factors is missing from this protein.</text>
</comment>
<accession>Q8SL90</accession>
<protein>
    <recommendedName>
        <fullName>DNA-directed RNA polymerase subunit alpha</fullName>
        <shortName>PEP</shortName>
        <ecNumber>2.7.7.6</ecNumber>
    </recommendedName>
    <alternativeName>
        <fullName>Plastid-encoded RNA polymerase subunit alpha</fullName>
        <shortName>RNA polymerase subunit alpha</shortName>
    </alternativeName>
</protein>
<reference key="1">
    <citation type="journal article" date="2002" name="Nucleic Acids Res.">
        <title>Identification and comparative analysis of the chloroplast alpha-subunit gene of DNA-dependent RNA polymerase from seven Euglena species.</title>
        <authorList>
            <person name="Sheveleva E.V."/>
            <person name="Giordani N.V."/>
            <person name="Hallick R.B."/>
        </authorList>
    </citation>
    <scope>NUCLEOTIDE SEQUENCE [GENOMIC DNA]</scope>
    <source>
        <strain>UTEX 1989</strain>
    </source>
</reference>
<gene>
    <name type="primary">rpoA</name>
</gene>
<geneLocation type="chloroplast"/>
<keyword id="KW-0150">Chloroplast</keyword>
<keyword id="KW-0240">DNA-directed RNA polymerase</keyword>
<keyword id="KW-0548">Nucleotidyltransferase</keyword>
<keyword id="KW-0934">Plastid</keyword>
<keyword id="KW-0804">Transcription</keyword>
<keyword id="KW-0808">Transferase</keyword>
<dbReference type="EC" id="2.7.7.6"/>
<dbReference type="EMBL" id="AY047485">
    <property type="protein sequence ID" value="AAL83364.1"/>
    <property type="molecule type" value="Genomic_DNA"/>
</dbReference>
<dbReference type="SMR" id="Q8SL90"/>
<dbReference type="GO" id="GO:0009507">
    <property type="term" value="C:chloroplast"/>
    <property type="evidence" value="ECO:0007669"/>
    <property type="project" value="UniProtKB-SubCell"/>
</dbReference>
<dbReference type="GO" id="GO:0000428">
    <property type="term" value="C:DNA-directed RNA polymerase complex"/>
    <property type="evidence" value="ECO:0007669"/>
    <property type="project" value="UniProtKB-KW"/>
</dbReference>
<dbReference type="GO" id="GO:0005739">
    <property type="term" value="C:mitochondrion"/>
    <property type="evidence" value="ECO:0007669"/>
    <property type="project" value="GOC"/>
</dbReference>
<dbReference type="GO" id="GO:0003899">
    <property type="term" value="F:DNA-directed RNA polymerase activity"/>
    <property type="evidence" value="ECO:0007669"/>
    <property type="project" value="UniProtKB-EC"/>
</dbReference>
<dbReference type="GO" id="GO:0046983">
    <property type="term" value="F:protein dimerization activity"/>
    <property type="evidence" value="ECO:0007669"/>
    <property type="project" value="InterPro"/>
</dbReference>
<dbReference type="GO" id="GO:0006351">
    <property type="term" value="P:DNA-templated transcription"/>
    <property type="evidence" value="ECO:0007669"/>
    <property type="project" value="InterPro"/>
</dbReference>
<dbReference type="Gene3D" id="2.170.120.12">
    <property type="entry name" value="DNA-directed RNA polymerase, insert domain"/>
    <property type="match status" value="1"/>
</dbReference>
<dbReference type="Gene3D" id="3.30.1360.10">
    <property type="entry name" value="RNA polymerase, RBP11-like subunit"/>
    <property type="match status" value="1"/>
</dbReference>
<dbReference type="InterPro" id="IPR011263">
    <property type="entry name" value="DNA-dir_RNA_pol_RpoA/D/Rpb3"/>
</dbReference>
<dbReference type="InterPro" id="IPR036603">
    <property type="entry name" value="RBP11-like"/>
</dbReference>
<dbReference type="InterPro" id="IPR036643">
    <property type="entry name" value="RNApol_insert_sf"/>
</dbReference>
<dbReference type="Pfam" id="PF01193">
    <property type="entry name" value="RNA_pol_L"/>
    <property type="match status" value="1"/>
</dbReference>
<dbReference type="SUPFAM" id="SSF56553">
    <property type="entry name" value="Insert subdomain of RNA polymerase alpha subunit"/>
    <property type="match status" value="1"/>
</dbReference>
<dbReference type="SUPFAM" id="SSF55257">
    <property type="entry name" value="RBP11-like subunits of RNA polymerase"/>
    <property type="match status" value="1"/>
</dbReference>
<feature type="chain" id="PRO_0000175508" description="DNA-directed RNA polymerase subunit alpha">
    <location>
        <begin position="1"/>
        <end position="207"/>
    </location>
</feature>
<proteinExistence type="inferred from homology"/>
<sequence length="207" mass="24663">MKLLNLKIMNKKRLKDQLYLLVILEKNLIKLELLSFSNLIRRILLKEIYNFKVSTISIFLFNSNKFCYKIHEFTKVEEVKNNLVSFLILLKEIKFRSYYKLKTKRTFALLKIKQFTQVFLTDIILPNNFKILSIDNNLIKLNSLDINLKVLLELHKSKGYNFNPVKKVNYIEENNVYFEIYTNQTSTPLEVLVKSLKIIKLETYLAI</sequence>
<name>RPOA_EUGMY</name>
<evidence type="ECO:0000250" key="1"/>
<evidence type="ECO:0000305" key="2"/>